<feature type="chain" id="PRO_1000131121" description="UPF0246 protein FMG_1068">
    <location>
        <begin position="1"/>
        <end position="244"/>
    </location>
</feature>
<keyword id="KW-1185">Reference proteome</keyword>
<organism>
    <name type="scientific">Finegoldia magna (strain ATCC 29328 / DSM 20472 / WAL 2508)</name>
    <name type="common">Peptostreptococcus magnus</name>
    <dbReference type="NCBI Taxonomy" id="334413"/>
    <lineage>
        <taxon>Bacteria</taxon>
        <taxon>Bacillati</taxon>
        <taxon>Bacillota</taxon>
        <taxon>Tissierellia</taxon>
        <taxon>Tissierellales</taxon>
        <taxon>Peptoniphilaceae</taxon>
        <taxon>Finegoldia</taxon>
    </lineage>
</organism>
<proteinExistence type="inferred from homology"/>
<accession>B0S296</accession>
<gene>
    <name type="ordered locus">FMG_1068</name>
</gene>
<protein>
    <recommendedName>
        <fullName evidence="1">UPF0246 protein FMG_1068</fullName>
    </recommendedName>
</protein>
<reference key="1">
    <citation type="journal article" date="2008" name="DNA Res.">
        <title>Complete genome sequence of Finegoldia magna, an anaerobic opportunistic pathogen.</title>
        <authorList>
            <person name="Goto T."/>
            <person name="Yamashita A."/>
            <person name="Hirakawa H."/>
            <person name="Matsutani M."/>
            <person name="Todo K."/>
            <person name="Ohshima K."/>
            <person name="Toh H."/>
            <person name="Miyamoto K."/>
            <person name="Kuhara S."/>
            <person name="Hattori M."/>
            <person name="Shimizu T."/>
            <person name="Akimoto S."/>
        </authorList>
    </citation>
    <scope>NUCLEOTIDE SEQUENCE [LARGE SCALE GENOMIC DNA]</scope>
    <source>
        <strain>ATCC 29328 / DSM 20472 / WAL 2508</strain>
    </source>
</reference>
<sequence>MKIIISPAKTFKIRKLKKENIDCLFENKKNALVSIMKEKSIEELKSMWKCSDKIAEESYKLYKNFDVSPKGCAIRSFDGIQYQYMDVDSLDEDKLEYLEEHLRILSGLYGILRPFDQISKYRLDFEDKFINLYEFWEDEIRNHFEGEEIIDLASKEYGQNIYKYLDKAPVKIEFKEEVLIDGDIKLKTKATPSKILRGRMVNYMARNHIENIEQLKKFSCDGYNYSEKNSDKKKLVFVKSLVSE</sequence>
<comment type="similarity">
    <text evidence="1">Belongs to the UPF0246 family.</text>
</comment>
<dbReference type="EMBL" id="AP008971">
    <property type="protein sequence ID" value="BAG08486.1"/>
    <property type="molecule type" value="Genomic_DNA"/>
</dbReference>
<dbReference type="RefSeq" id="WP_012290809.1">
    <property type="nucleotide sequence ID" value="NC_010376.1"/>
</dbReference>
<dbReference type="SMR" id="B0S296"/>
<dbReference type="STRING" id="334413.FMG_1068"/>
<dbReference type="KEGG" id="fma:FMG_1068"/>
<dbReference type="eggNOG" id="COG3022">
    <property type="taxonomic scope" value="Bacteria"/>
</dbReference>
<dbReference type="HOGENOM" id="CLU_061989_2_0_9"/>
<dbReference type="Proteomes" id="UP000001319">
    <property type="component" value="Chromosome"/>
</dbReference>
<dbReference type="GO" id="GO:0005829">
    <property type="term" value="C:cytosol"/>
    <property type="evidence" value="ECO:0007669"/>
    <property type="project" value="TreeGrafter"/>
</dbReference>
<dbReference type="GO" id="GO:0033194">
    <property type="term" value="P:response to hydroperoxide"/>
    <property type="evidence" value="ECO:0007669"/>
    <property type="project" value="TreeGrafter"/>
</dbReference>
<dbReference type="HAMAP" id="MF_00652">
    <property type="entry name" value="UPF0246"/>
    <property type="match status" value="1"/>
</dbReference>
<dbReference type="InterPro" id="IPR005583">
    <property type="entry name" value="YaaA"/>
</dbReference>
<dbReference type="NCBIfam" id="NF002543">
    <property type="entry name" value="PRK02101.1-4"/>
    <property type="match status" value="1"/>
</dbReference>
<dbReference type="PANTHER" id="PTHR30283:SF4">
    <property type="entry name" value="PEROXIDE STRESS RESISTANCE PROTEIN YAAA"/>
    <property type="match status" value="1"/>
</dbReference>
<dbReference type="PANTHER" id="PTHR30283">
    <property type="entry name" value="PEROXIDE STRESS RESPONSE PROTEIN YAAA"/>
    <property type="match status" value="1"/>
</dbReference>
<dbReference type="Pfam" id="PF03883">
    <property type="entry name" value="H2O2_YaaD"/>
    <property type="match status" value="1"/>
</dbReference>
<name>Y1068_FINM2</name>
<evidence type="ECO:0000255" key="1">
    <source>
        <dbReference type="HAMAP-Rule" id="MF_00652"/>
    </source>
</evidence>